<dbReference type="EC" id="2.7.7.6" evidence="1"/>
<dbReference type="EMBL" id="AY958085">
    <property type="protein sequence ID" value="AAX45746.1"/>
    <property type="molecule type" value="Genomic_DNA"/>
</dbReference>
<dbReference type="RefSeq" id="YP_636429.1">
    <property type="nucleotide sequence ID" value="NC_008116.1"/>
</dbReference>
<dbReference type="SMR" id="Q32RU7"/>
<dbReference type="GeneID" id="4108608"/>
<dbReference type="GO" id="GO:0009507">
    <property type="term" value="C:chloroplast"/>
    <property type="evidence" value="ECO:0007669"/>
    <property type="project" value="UniProtKB-SubCell"/>
</dbReference>
<dbReference type="GO" id="GO:0000428">
    <property type="term" value="C:DNA-directed RNA polymerase complex"/>
    <property type="evidence" value="ECO:0007669"/>
    <property type="project" value="UniProtKB-KW"/>
</dbReference>
<dbReference type="GO" id="GO:0005739">
    <property type="term" value="C:mitochondrion"/>
    <property type="evidence" value="ECO:0007669"/>
    <property type="project" value="GOC"/>
</dbReference>
<dbReference type="GO" id="GO:0003677">
    <property type="term" value="F:DNA binding"/>
    <property type="evidence" value="ECO:0007669"/>
    <property type="project" value="UniProtKB-UniRule"/>
</dbReference>
<dbReference type="GO" id="GO:0003899">
    <property type="term" value="F:DNA-directed RNA polymerase activity"/>
    <property type="evidence" value="ECO:0007669"/>
    <property type="project" value="UniProtKB-UniRule"/>
</dbReference>
<dbReference type="GO" id="GO:0046983">
    <property type="term" value="F:protein dimerization activity"/>
    <property type="evidence" value="ECO:0007669"/>
    <property type="project" value="InterPro"/>
</dbReference>
<dbReference type="GO" id="GO:0006351">
    <property type="term" value="P:DNA-templated transcription"/>
    <property type="evidence" value="ECO:0007669"/>
    <property type="project" value="UniProtKB-UniRule"/>
</dbReference>
<dbReference type="CDD" id="cd06928">
    <property type="entry name" value="RNAP_alpha_NTD"/>
    <property type="match status" value="1"/>
</dbReference>
<dbReference type="Gene3D" id="1.10.150.20">
    <property type="entry name" value="5' to 3' exonuclease, C-terminal subdomain"/>
    <property type="match status" value="1"/>
</dbReference>
<dbReference type="Gene3D" id="2.170.120.12">
    <property type="entry name" value="DNA-directed RNA polymerase, insert domain"/>
    <property type="match status" value="1"/>
</dbReference>
<dbReference type="Gene3D" id="3.30.1360.10">
    <property type="entry name" value="RNA polymerase, RBP11-like subunit"/>
    <property type="match status" value="1"/>
</dbReference>
<dbReference type="HAMAP" id="MF_00059">
    <property type="entry name" value="RNApol_bact_RpoA"/>
    <property type="match status" value="1"/>
</dbReference>
<dbReference type="InterPro" id="IPR011262">
    <property type="entry name" value="DNA-dir_RNA_pol_insert"/>
</dbReference>
<dbReference type="InterPro" id="IPR011263">
    <property type="entry name" value="DNA-dir_RNA_pol_RpoA/D/Rpb3"/>
</dbReference>
<dbReference type="InterPro" id="IPR011773">
    <property type="entry name" value="DNA-dir_RpoA"/>
</dbReference>
<dbReference type="InterPro" id="IPR036603">
    <property type="entry name" value="RBP11-like"/>
</dbReference>
<dbReference type="InterPro" id="IPR011260">
    <property type="entry name" value="RNAP_asu_C"/>
</dbReference>
<dbReference type="InterPro" id="IPR036643">
    <property type="entry name" value="RNApol_insert_sf"/>
</dbReference>
<dbReference type="Pfam" id="PF01000">
    <property type="entry name" value="RNA_pol_A_bac"/>
    <property type="match status" value="1"/>
</dbReference>
<dbReference type="Pfam" id="PF03118">
    <property type="entry name" value="RNA_pol_A_CTD"/>
    <property type="match status" value="1"/>
</dbReference>
<dbReference type="Pfam" id="PF01193">
    <property type="entry name" value="RNA_pol_L"/>
    <property type="match status" value="1"/>
</dbReference>
<dbReference type="SMART" id="SM00662">
    <property type="entry name" value="RPOLD"/>
    <property type="match status" value="1"/>
</dbReference>
<dbReference type="SUPFAM" id="SSF47789">
    <property type="entry name" value="C-terminal domain of RNA polymerase alpha subunit"/>
    <property type="match status" value="1"/>
</dbReference>
<dbReference type="SUPFAM" id="SSF56553">
    <property type="entry name" value="Insert subdomain of RNA polymerase alpha subunit"/>
    <property type="match status" value="1"/>
</dbReference>
<dbReference type="SUPFAM" id="SSF55257">
    <property type="entry name" value="RBP11-like subunits of RNA polymerase"/>
    <property type="match status" value="1"/>
</dbReference>
<geneLocation type="chloroplast"/>
<keyword id="KW-0150">Chloroplast</keyword>
<keyword id="KW-0240">DNA-directed RNA polymerase</keyword>
<keyword id="KW-0548">Nucleotidyltransferase</keyword>
<keyword id="KW-0934">Plastid</keyword>
<keyword id="KW-0804">Transcription</keyword>
<keyword id="KW-0808">Transferase</keyword>
<sequence length="383" mass="42742">MEKKTGLIQFLSEWKCVDDQPDHNRRLHYSRFALSPLLVDQAMTIGVAIRRALLSEVEGISIISANIVGAVHEYSTLDGVRESVDEILLNLKQIVIKGAKGASITPLDHKEYRASIFAQGPGVVTAEHIKFPSSILAVDPDQSIATLLNETQLCIELFIRQGIAKQLTRTKKNHQGFFIDANFTPVQKANFSIHSVGDPKGLQQLLLLEIWTNKTLTPAEALYQAHASLLNLFHQISPPLLHKELSPSKNILNQNSDSNSLGGSSFGRVVSLETRRDSTQTNNSSIPKEIQPSVRLKSYTDTNLSIDKQMNDSVNKENLSIDELELSPRISNCLKKANINTIADLLNYTQEDLLKIKNFGRKSVEQVSLVLRKRFNMELLPTK</sequence>
<comment type="function">
    <text evidence="1">DNA-dependent RNA polymerase catalyzes the transcription of DNA into RNA using the four ribonucleoside triphosphates as substrates.</text>
</comment>
<comment type="catalytic activity">
    <reaction evidence="1">
        <text>RNA(n) + a ribonucleoside 5'-triphosphate = RNA(n+1) + diphosphate</text>
        <dbReference type="Rhea" id="RHEA:21248"/>
        <dbReference type="Rhea" id="RHEA-COMP:14527"/>
        <dbReference type="Rhea" id="RHEA-COMP:17342"/>
        <dbReference type="ChEBI" id="CHEBI:33019"/>
        <dbReference type="ChEBI" id="CHEBI:61557"/>
        <dbReference type="ChEBI" id="CHEBI:140395"/>
        <dbReference type="EC" id="2.7.7.6"/>
    </reaction>
</comment>
<comment type="subunit">
    <text evidence="1">In plastids the minimal PEP RNA polymerase catalytic core is composed of four subunits: alpha, beta, beta', and beta''. When a (nuclear-encoded) sigma factor is associated with the core the holoenzyme is formed, which can initiate transcription.</text>
</comment>
<comment type="subcellular location">
    <subcellularLocation>
        <location>Plastid</location>
        <location>Chloroplast</location>
    </subcellularLocation>
</comment>
<comment type="domain">
    <text evidence="1">The N-terminal domain is essential for RNAP assembly and basal transcription, whereas the C-terminal domain is involved in interaction with transcriptional regulators and with upstream promoter elements.</text>
</comment>
<comment type="similarity">
    <text evidence="1">Belongs to the RNA polymerase alpha chain family.</text>
</comment>
<proteinExistence type="inferred from homology"/>
<evidence type="ECO:0000255" key="1">
    <source>
        <dbReference type="HAMAP-Rule" id="MF_00059"/>
    </source>
</evidence>
<protein>
    <recommendedName>
        <fullName evidence="1">DNA-directed RNA polymerase subunit alpha</fullName>
        <shortName evidence="1">PEP</shortName>
        <ecNumber evidence="1">2.7.7.6</ecNumber>
    </recommendedName>
    <alternativeName>
        <fullName evidence="1">Plastid-encoded RNA polymerase subunit alpha</fullName>
        <shortName evidence="1">RNA polymerase subunit alpha</shortName>
    </alternativeName>
</protein>
<gene>
    <name evidence="1" type="primary">rpoA</name>
</gene>
<name>RPOA_STAPU</name>
<organism>
    <name type="scientific">Staurastrum punctulatum</name>
    <name type="common">Green alga</name>
    <name type="synonym">Cosmoastrum punctulatum</name>
    <dbReference type="NCBI Taxonomy" id="102822"/>
    <lineage>
        <taxon>Eukaryota</taxon>
        <taxon>Viridiplantae</taxon>
        <taxon>Streptophyta</taxon>
        <taxon>Zygnematophyceae</taxon>
        <taxon>Zygnematophycidae</taxon>
        <taxon>Desmidiales</taxon>
        <taxon>Desmidiaceae</taxon>
        <taxon>Staurastrum</taxon>
    </lineage>
</organism>
<reference key="1">
    <citation type="journal article" date="2005" name="BMC Biol.">
        <title>The complete chloroplast DNA sequences of the charophycean green algae Staurastrum and Zygnema reveal that the chloroplast genome underwent extensive changes during the evolution of the Zygnematales.</title>
        <authorList>
            <person name="Turmel M."/>
            <person name="Otis C."/>
            <person name="Lemieux C."/>
        </authorList>
    </citation>
    <scope>NUCLEOTIDE SEQUENCE [LARGE SCALE GENOMIC DNA]</scope>
</reference>
<feature type="chain" id="PRO_0000296909" description="DNA-directed RNA polymerase subunit alpha">
    <location>
        <begin position="1"/>
        <end position="383"/>
    </location>
</feature>
<feature type="region of interest" description="Alpha N-terminal domain (alpha-NTD)" evidence="1">
    <location>
        <begin position="1"/>
        <end position="240"/>
    </location>
</feature>
<feature type="region of interest" description="Alpha C-terminal domain (alpha-CTD)" evidence="1">
    <location>
        <begin position="306"/>
        <end position="383"/>
    </location>
</feature>
<accession>Q32RU7</accession>